<reference key="1">
    <citation type="submission" date="2007-07" db="EMBL/GenBank/DDBJ databases">
        <title>Complete sequence of chromosome of Xanthobacter autotrophicus Py2.</title>
        <authorList>
            <consortium name="US DOE Joint Genome Institute"/>
            <person name="Copeland A."/>
            <person name="Lucas S."/>
            <person name="Lapidus A."/>
            <person name="Barry K."/>
            <person name="Glavina del Rio T."/>
            <person name="Hammon N."/>
            <person name="Israni S."/>
            <person name="Dalin E."/>
            <person name="Tice H."/>
            <person name="Pitluck S."/>
            <person name="Sims D."/>
            <person name="Brettin T."/>
            <person name="Bruce D."/>
            <person name="Detter J.C."/>
            <person name="Han C."/>
            <person name="Tapia R."/>
            <person name="Brainard J."/>
            <person name="Schmutz J."/>
            <person name="Larimer F."/>
            <person name="Land M."/>
            <person name="Hauser L."/>
            <person name="Kyrpides N."/>
            <person name="Kim E."/>
            <person name="Ensigns S.A."/>
            <person name="Richardson P."/>
        </authorList>
    </citation>
    <scope>NUCLEOTIDE SEQUENCE [LARGE SCALE GENOMIC DNA]</scope>
    <source>
        <strain>ATCC BAA-1158 / Py2</strain>
    </source>
</reference>
<gene>
    <name evidence="1" type="primary">pth</name>
    <name type="ordered locus">Xaut_2606</name>
</gene>
<comment type="function">
    <text evidence="1">Hydrolyzes ribosome-free peptidyl-tRNAs (with 1 or more amino acids incorporated), which drop off the ribosome during protein synthesis, or as a result of ribosome stalling.</text>
</comment>
<comment type="function">
    <text evidence="1">Catalyzes the release of premature peptidyl moieties from peptidyl-tRNA molecules trapped in stalled 50S ribosomal subunits, and thus maintains levels of free tRNAs and 50S ribosomes.</text>
</comment>
<comment type="catalytic activity">
    <reaction evidence="1">
        <text>an N-acyl-L-alpha-aminoacyl-tRNA + H2O = an N-acyl-L-amino acid + a tRNA + H(+)</text>
        <dbReference type="Rhea" id="RHEA:54448"/>
        <dbReference type="Rhea" id="RHEA-COMP:10123"/>
        <dbReference type="Rhea" id="RHEA-COMP:13883"/>
        <dbReference type="ChEBI" id="CHEBI:15377"/>
        <dbReference type="ChEBI" id="CHEBI:15378"/>
        <dbReference type="ChEBI" id="CHEBI:59874"/>
        <dbReference type="ChEBI" id="CHEBI:78442"/>
        <dbReference type="ChEBI" id="CHEBI:138191"/>
        <dbReference type="EC" id="3.1.1.29"/>
    </reaction>
</comment>
<comment type="subunit">
    <text evidence="1">Monomer.</text>
</comment>
<comment type="subcellular location">
    <subcellularLocation>
        <location evidence="1">Cytoplasm</location>
    </subcellularLocation>
</comment>
<comment type="similarity">
    <text evidence="1">Belongs to the PTH family.</text>
</comment>
<feature type="chain" id="PRO_1000093003" description="Peptidyl-tRNA hydrolase">
    <location>
        <begin position="1"/>
        <end position="202"/>
    </location>
</feature>
<feature type="active site" description="Proton acceptor" evidence="1">
    <location>
        <position position="19"/>
    </location>
</feature>
<feature type="binding site" evidence="1">
    <location>
        <position position="14"/>
    </location>
    <ligand>
        <name>tRNA</name>
        <dbReference type="ChEBI" id="CHEBI:17843"/>
    </ligand>
</feature>
<feature type="binding site" evidence="1">
    <location>
        <position position="64"/>
    </location>
    <ligand>
        <name>tRNA</name>
        <dbReference type="ChEBI" id="CHEBI:17843"/>
    </ligand>
</feature>
<feature type="binding site" evidence="1">
    <location>
        <position position="66"/>
    </location>
    <ligand>
        <name>tRNA</name>
        <dbReference type="ChEBI" id="CHEBI:17843"/>
    </ligand>
</feature>
<feature type="binding site" evidence="1">
    <location>
        <position position="112"/>
    </location>
    <ligand>
        <name>tRNA</name>
        <dbReference type="ChEBI" id="CHEBI:17843"/>
    </ligand>
</feature>
<feature type="site" description="Discriminates between blocked and unblocked aminoacyl-tRNA" evidence="1">
    <location>
        <position position="9"/>
    </location>
</feature>
<feature type="site" description="Stabilizes the basic form of H active site to accept a proton" evidence="1">
    <location>
        <position position="91"/>
    </location>
</feature>
<keyword id="KW-0963">Cytoplasm</keyword>
<keyword id="KW-0378">Hydrolase</keyword>
<keyword id="KW-1185">Reference proteome</keyword>
<keyword id="KW-0694">RNA-binding</keyword>
<keyword id="KW-0820">tRNA-binding</keyword>
<organism>
    <name type="scientific">Xanthobacter autotrophicus (strain ATCC BAA-1158 / Py2)</name>
    <dbReference type="NCBI Taxonomy" id="78245"/>
    <lineage>
        <taxon>Bacteria</taxon>
        <taxon>Pseudomonadati</taxon>
        <taxon>Pseudomonadota</taxon>
        <taxon>Alphaproteobacteria</taxon>
        <taxon>Hyphomicrobiales</taxon>
        <taxon>Xanthobacteraceae</taxon>
        <taxon>Xanthobacter</taxon>
    </lineage>
</organism>
<protein>
    <recommendedName>
        <fullName evidence="1">Peptidyl-tRNA hydrolase</fullName>
        <shortName evidence="1">Pth</shortName>
        <ecNumber evidence="1">3.1.1.29</ecNumber>
    </recommendedName>
</protein>
<proteinExistence type="inferred from homology"/>
<evidence type="ECO:0000255" key="1">
    <source>
        <dbReference type="HAMAP-Rule" id="MF_00083"/>
    </source>
</evidence>
<accession>A7IIK5</accession>
<name>PTH_XANP2</name>
<dbReference type="EC" id="3.1.1.29" evidence="1"/>
<dbReference type="EMBL" id="CP000781">
    <property type="protein sequence ID" value="ABS67848.1"/>
    <property type="molecule type" value="Genomic_DNA"/>
</dbReference>
<dbReference type="SMR" id="A7IIK5"/>
<dbReference type="STRING" id="78245.Xaut_2606"/>
<dbReference type="KEGG" id="xau:Xaut_2606"/>
<dbReference type="eggNOG" id="COG0193">
    <property type="taxonomic scope" value="Bacteria"/>
</dbReference>
<dbReference type="HOGENOM" id="CLU_062456_1_0_5"/>
<dbReference type="OrthoDB" id="9800507at2"/>
<dbReference type="PhylomeDB" id="A7IIK5"/>
<dbReference type="Proteomes" id="UP000002417">
    <property type="component" value="Chromosome"/>
</dbReference>
<dbReference type="GO" id="GO:0005737">
    <property type="term" value="C:cytoplasm"/>
    <property type="evidence" value="ECO:0007669"/>
    <property type="project" value="UniProtKB-SubCell"/>
</dbReference>
<dbReference type="GO" id="GO:0004045">
    <property type="term" value="F:peptidyl-tRNA hydrolase activity"/>
    <property type="evidence" value="ECO:0007669"/>
    <property type="project" value="UniProtKB-UniRule"/>
</dbReference>
<dbReference type="GO" id="GO:0000049">
    <property type="term" value="F:tRNA binding"/>
    <property type="evidence" value="ECO:0007669"/>
    <property type="project" value="UniProtKB-UniRule"/>
</dbReference>
<dbReference type="GO" id="GO:0006515">
    <property type="term" value="P:protein quality control for misfolded or incompletely synthesized proteins"/>
    <property type="evidence" value="ECO:0007669"/>
    <property type="project" value="UniProtKB-UniRule"/>
</dbReference>
<dbReference type="GO" id="GO:0072344">
    <property type="term" value="P:rescue of stalled ribosome"/>
    <property type="evidence" value="ECO:0007669"/>
    <property type="project" value="UniProtKB-UniRule"/>
</dbReference>
<dbReference type="CDD" id="cd00462">
    <property type="entry name" value="PTH"/>
    <property type="match status" value="1"/>
</dbReference>
<dbReference type="FunFam" id="3.40.50.1470:FF:000001">
    <property type="entry name" value="Peptidyl-tRNA hydrolase"/>
    <property type="match status" value="1"/>
</dbReference>
<dbReference type="Gene3D" id="3.40.50.1470">
    <property type="entry name" value="Peptidyl-tRNA hydrolase"/>
    <property type="match status" value="1"/>
</dbReference>
<dbReference type="HAMAP" id="MF_00083">
    <property type="entry name" value="Pept_tRNA_hydro_bact"/>
    <property type="match status" value="1"/>
</dbReference>
<dbReference type="InterPro" id="IPR001328">
    <property type="entry name" value="Pept_tRNA_hydro"/>
</dbReference>
<dbReference type="InterPro" id="IPR018171">
    <property type="entry name" value="Pept_tRNA_hydro_CS"/>
</dbReference>
<dbReference type="InterPro" id="IPR036416">
    <property type="entry name" value="Pept_tRNA_hydro_sf"/>
</dbReference>
<dbReference type="NCBIfam" id="TIGR00447">
    <property type="entry name" value="pth"/>
    <property type="match status" value="1"/>
</dbReference>
<dbReference type="PANTHER" id="PTHR17224">
    <property type="entry name" value="PEPTIDYL-TRNA HYDROLASE"/>
    <property type="match status" value="1"/>
</dbReference>
<dbReference type="PANTHER" id="PTHR17224:SF1">
    <property type="entry name" value="PEPTIDYL-TRNA HYDROLASE"/>
    <property type="match status" value="1"/>
</dbReference>
<dbReference type="Pfam" id="PF01195">
    <property type="entry name" value="Pept_tRNA_hydro"/>
    <property type="match status" value="1"/>
</dbReference>
<dbReference type="SUPFAM" id="SSF53178">
    <property type="entry name" value="Peptidyl-tRNA hydrolase-like"/>
    <property type="match status" value="1"/>
</dbReference>
<dbReference type="PROSITE" id="PS01195">
    <property type="entry name" value="PEPT_TRNA_HYDROL_1"/>
    <property type="match status" value="1"/>
</dbReference>
<dbReference type="PROSITE" id="PS01196">
    <property type="entry name" value="PEPT_TRNA_HYDROL_2"/>
    <property type="match status" value="1"/>
</dbReference>
<sequence>MFLFAGLGNPGPKYAGNRHNIGFMALEAICRRHRLGPLRRRFQSLAAEGEIAGEKVIALFPETYMNESGRAVSEAQRFYKIPLDHIFVFHDELDLPPAKLRIKKGGGNAGHNGLRSITAQCGNDYFRVRLGIGHPGDKALVHAYVLNDFAKSEKPWLDAVCDACADFADLLAQKRPEEFQNRAHLFLDAQGFGEQKRVGEKG</sequence>